<keyword id="KW-0067">ATP-binding</keyword>
<keyword id="KW-0119">Carbohydrate metabolism</keyword>
<keyword id="KW-0418">Kinase</keyword>
<keyword id="KW-0511">Multifunctional enzyme</keyword>
<keyword id="KW-0547">Nucleotide-binding</keyword>
<keyword id="KW-0548">Nucleotidyltransferase</keyword>
<keyword id="KW-0808">Transferase</keyword>
<feature type="chain" id="PRO_0000255780" description="Bifunctional protein HldE">
    <location>
        <begin position="1"/>
        <end position="477"/>
    </location>
</feature>
<feature type="region of interest" description="Ribokinase">
    <location>
        <begin position="1"/>
        <end position="318"/>
    </location>
</feature>
<feature type="region of interest" description="Cytidylyltransferase">
    <location>
        <begin position="344"/>
        <end position="477"/>
    </location>
</feature>
<feature type="active site" evidence="1">
    <location>
        <position position="264"/>
    </location>
</feature>
<feature type="binding site" evidence="1">
    <location>
        <begin position="195"/>
        <end position="198"/>
    </location>
    <ligand>
        <name>ATP</name>
        <dbReference type="ChEBI" id="CHEBI:30616"/>
    </ligand>
</feature>
<evidence type="ECO:0000255" key="1">
    <source>
        <dbReference type="HAMAP-Rule" id="MF_01603"/>
    </source>
</evidence>
<comment type="function">
    <text evidence="1">Catalyzes the phosphorylation of D-glycero-D-manno-heptose 7-phosphate at the C-1 position to selectively form D-glycero-beta-D-manno-heptose-1,7-bisphosphate.</text>
</comment>
<comment type="function">
    <text evidence="1">Catalyzes the ADP transfer from ATP to D-glycero-beta-D-manno-heptose 1-phosphate, yielding ADP-D-glycero-beta-D-manno-heptose.</text>
</comment>
<comment type="catalytic activity">
    <reaction evidence="1">
        <text>D-glycero-beta-D-manno-heptose 7-phosphate + ATP = D-glycero-beta-D-manno-heptose 1,7-bisphosphate + ADP + H(+)</text>
        <dbReference type="Rhea" id="RHEA:27473"/>
        <dbReference type="ChEBI" id="CHEBI:15378"/>
        <dbReference type="ChEBI" id="CHEBI:30616"/>
        <dbReference type="ChEBI" id="CHEBI:60204"/>
        <dbReference type="ChEBI" id="CHEBI:60208"/>
        <dbReference type="ChEBI" id="CHEBI:456216"/>
        <dbReference type="EC" id="2.7.1.167"/>
    </reaction>
</comment>
<comment type="catalytic activity">
    <reaction evidence="1">
        <text>D-glycero-beta-D-manno-heptose 1-phosphate + ATP + H(+) = ADP-D-glycero-beta-D-manno-heptose + diphosphate</text>
        <dbReference type="Rhea" id="RHEA:27465"/>
        <dbReference type="ChEBI" id="CHEBI:15378"/>
        <dbReference type="ChEBI" id="CHEBI:30616"/>
        <dbReference type="ChEBI" id="CHEBI:33019"/>
        <dbReference type="ChEBI" id="CHEBI:59967"/>
        <dbReference type="ChEBI" id="CHEBI:61593"/>
        <dbReference type="EC" id="2.7.7.70"/>
    </reaction>
</comment>
<comment type="pathway">
    <text evidence="1">Nucleotide-sugar biosynthesis; ADP-L-glycero-beta-D-manno-heptose biosynthesis; ADP-L-glycero-beta-D-manno-heptose from D-glycero-beta-D-manno-heptose 7-phosphate: step 1/4.</text>
</comment>
<comment type="pathway">
    <text evidence="1">Nucleotide-sugar biosynthesis; ADP-L-glycero-beta-D-manno-heptose biosynthesis; ADP-L-glycero-beta-D-manno-heptose from D-glycero-beta-D-manno-heptose 7-phosphate: step 3/4.</text>
</comment>
<comment type="subunit">
    <text evidence="1">Homodimer.</text>
</comment>
<comment type="similarity">
    <text evidence="1">In the N-terminal section; belongs to the carbohydrate kinase PfkB family.</text>
</comment>
<comment type="similarity">
    <text evidence="1">In the C-terminal section; belongs to the cytidylyltransferase family.</text>
</comment>
<name>HLDE_SALCH</name>
<sequence length="477" mass="51124">MKVNLPAFERAGVMVVGDVMLDRYWYGPTCRISPEAPVPVVKVNTVEERPGGAANVAMNIASLGANARLVGLTGIDDAARALSKTLAEVNVKCDFVSVPTHPTITKLRVLSRNQQLIRLDFEEGFEGVDPQPLHERINQALGSIGALVLSDYAKGALTSVQTMISLARQAGVPVLIDPKGTDFERYRGATLLTPNLSEFEAVAGKCKSEDELVERGMKLIADYDLSALLVTRSEQGMTLLQPNKAPLHMPTQAQEVYDVTGAGDTVIGVLAATLAAGNTLEEACYFANAAAGVVVGKLGTSTVSPIELENAVRGRADTGFGVMTEEELRQAVASARKRGEKVVMTNGVFDILHAGHVSYLANARKLGDRLIVAVNSDASTKRLKGESRPVNPLEQRMIVLGALESVDWVVSFEEDTPQRLIAGILPDLLVKGGDYKPEEIAGSEEVWANGGEVMVLNFEDGCSTTNIIKKIQTESEK</sequence>
<organism>
    <name type="scientific">Salmonella choleraesuis (strain SC-B67)</name>
    <dbReference type="NCBI Taxonomy" id="321314"/>
    <lineage>
        <taxon>Bacteria</taxon>
        <taxon>Pseudomonadati</taxon>
        <taxon>Pseudomonadota</taxon>
        <taxon>Gammaproteobacteria</taxon>
        <taxon>Enterobacterales</taxon>
        <taxon>Enterobacteriaceae</taxon>
        <taxon>Salmonella</taxon>
    </lineage>
</organism>
<proteinExistence type="inferred from homology"/>
<gene>
    <name evidence="1" type="primary">hldE</name>
    <name type="ordered locus">SCH_3147</name>
</gene>
<accession>Q57JQ9</accession>
<dbReference type="EC" id="2.7.1.167" evidence="1"/>
<dbReference type="EC" id="2.7.7.70" evidence="1"/>
<dbReference type="EMBL" id="AE017220">
    <property type="protein sequence ID" value="AAX67053.1"/>
    <property type="molecule type" value="Genomic_DNA"/>
</dbReference>
<dbReference type="RefSeq" id="WP_000867682.1">
    <property type="nucleotide sequence ID" value="NC_006905.1"/>
</dbReference>
<dbReference type="SMR" id="Q57JQ9"/>
<dbReference type="KEGG" id="sec:SCH_3147"/>
<dbReference type="HOGENOM" id="CLU_021150_2_1_6"/>
<dbReference type="UniPathway" id="UPA00356">
    <property type="reaction ID" value="UER00437"/>
</dbReference>
<dbReference type="UniPathway" id="UPA00356">
    <property type="reaction ID" value="UER00439"/>
</dbReference>
<dbReference type="Proteomes" id="UP000000538">
    <property type="component" value="Chromosome"/>
</dbReference>
<dbReference type="GO" id="GO:0005829">
    <property type="term" value="C:cytosol"/>
    <property type="evidence" value="ECO:0007669"/>
    <property type="project" value="TreeGrafter"/>
</dbReference>
<dbReference type="GO" id="GO:0005524">
    <property type="term" value="F:ATP binding"/>
    <property type="evidence" value="ECO:0007669"/>
    <property type="project" value="UniProtKB-UniRule"/>
</dbReference>
<dbReference type="GO" id="GO:0033785">
    <property type="term" value="F:heptose 7-phosphate kinase activity"/>
    <property type="evidence" value="ECO:0007669"/>
    <property type="project" value="UniProtKB-UniRule"/>
</dbReference>
<dbReference type="GO" id="GO:0033786">
    <property type="term" value="F:heptose-1-phosphate adenylyltransferase activity"/>
    <property type="evidence" value="ECO:0007669"/>
    <property type="project" value="UniProtKB-UniRule"/>
</dbReference>
<dbReference type="GO" id="GO:0016773">
    <property type="term" value="F:phosphotransferase activity, alcohol group as acceptor"/>
    <property type="evidence" value="ECO:0007669"/>
    <property type="project" value="InterPro"/>
</dbReference>
<dbReference type="GO" id="GO:0097171">
    <property type="term" value="P:ADP-L-glycero-beta-D-manno-heptose biosynthetic process"/>
    <property type="evidence" value="ECO:0007669"/>
    <property type="project" value="UniProtKB-UniPathway"/>
</dbReference>
<dbReference type="CDD" id="cd01172">
    <property type="entry name" value="RfaE_like"/>
    <property type="match status" value="1"/>
</dbReference>
<dbReference type="FunFam" id="3.40.1190.20:FF:000002">
    <property type="entry name" value="Bifunctional protein HldE"/>
    <property type="match status" value="1"/>
</dbReference>
<dbReference type="FunFam" id="3.40.50.620:FF:000028">
    <property type="entry name" value="Bifunctional protein HldE"/>
    <property type="match status" value="1"/>
</dbReference>
<dbReference type="Gene3D" id="3.40.1190.20">
    <property type="match status" value="1"/>
</dbReference>
<dbReference type="Gene3D" id="3.40.50.620">
    <property type="entry name" value="HUPs"/>
    <property type="match status" value="1"/>
</dbReference>
<dbReference type="HAMAP" id="MF_01603">
    <property type="entry name" value="HldE"/>
    <property type="match status" value="1"/>
</dbReference>
<dbReference type="InterPro" id="IPR023030">
    <property type="entry name" value="Bifunc_HldE"/>
</dbReference>
<dbReference type="InterPro" id="IPR002173">
    <property type="entry name" value="Carboh/pur_kinase_PfkB_CS"/>
</dbReference>
<dbReference type="InterPro" id="IPR004821">
    <property type="entry name" value="Cyt_trans-like"/>
</dbReference>
<dbReference type="InterPro" id="IPR011611">
    <property type="entry name" value="PfkB_dom"/>
</dbReference>
<dbReference type="InterPro" id="IPR011913">
    <property type="entry name" value="RfaE_dom_I"/>
</dbReference>
<dbReference type="InterPro" id="IPR011914">
    <property type="entry name" value="RfaE_dom_II"/>
</dbReference>
<dbReference type="InterPro" id="IPR029056">
    <property type="entry name" value="Ribokinase-like"/>
</dbReference>
<dbReference type="InterPro" id="IPR014729">
    <property type="entry name" value="Rossmann-like_a/b/a_fold"/>
</dbReference>
<dbReference type="NCBIfam" id="TIGR00125">
    <property type="entry name" value="cyt_tran_rel"/>
    <property type="match status" value="1"/>
</dbReference>
<dbReference type="NCBIfam" id="NF008454">
    <property type="entry name" value="PRK11316.1"/>
    <property type="match status" value="1"/>
</dbReference>
<dbReference type="NCBIfam" id="TIGR02198">
    <property type="entry name" value="rfaE_dom_I"/>
    <property type="match status" value="1"/>
</dbReference>
<dbReference type="NCBIfam" id="TIGR02199">
    <property type="entry name" value="rfaE_dom_II"/>
    <property type="match status" value="1"/>
</dbReference>
<dbReference type="PANTHER" id="PTHR46969">
    <property type="entry name" value="BIFUNCTIONAL PROTEIN HLDE"/>
    <property type="match status" value="1"/>
</dbReference>
<dbReference type="PANTHER" id="PTHR46969:SF1">
    <property type="entry name" value="BIFUNCTIONAL PROTEIN HLDE"/>
    <property type="match status" value="1"/>
</dbReference>
<dbReference type="Pfam" id="PF01467">
    <property type="entry name" value="CTP_transf_like"/>
    <property type="match status" value="1"/>
</dbReference>
<dbReference type="Pfam" id="PF00294">
    <property type="entry name" value="PfkB"/>
    <property type="match status" value="1"/>
</dbReference>
<dbReference type="SUPFAM" id="SSF52374">
    <property type="entry name" value="Nucleotidylyl transferase"/>
    <property type="match status" value="1"/>
</dbReference>
<dbReference type="SUPFAM" id="SSF53613">
    <property type="entry name" value="Ribokinase-like"/>
    <property type="match status" value="1"/>
</dbReference>
<dbReference type="PROSITE" id="PS00583">
    <property type="entry name" value="PFKB_KINASES_1"/>
    <property type="match status" value="1"/>
</dbReference>
<reference key="1">
    <citation type="journal article" date="2005" name="Nucleic Acids Res.">
        <title>The genome sequence of Salmonella enterica serovar Choleraesuis, a highly invasive and resistant zoonotic pathogen.</title>
        <authorList>
            <person name="Chiu C.-H."/>
            <person name="Tang P."/>
            <person name="Chu C."/>
            <person name="Hu S."/>
            <person name="Bao Q."/>
            <person name="Yu J."/>
            <person name="Chou Y.-Y."/>
            <person name="Wang H.-S."/>
            <person name="Lee Y.-S."/>
        </authorList>
    </citation>
    <scope>NUCLEOTIDE SEQUENCE [LARGE SCALE GENOMIC DNA]</scope>
    <source>
        <strain>SC-B67</strain>
    </source>
</reference>
<protein>
    <recommendedName>
        <fullName evidence="1">Bifunctional protein HldE</fullName>
    </recommendedName>
    <domain>
        <recommendedName>
            <fullName evidence="1">D-beta-D-heptose 7-phosphate kinase</fullName>
            <ecNumber evidence="1">2.7.1.167</ecNumber>
        </recommendedName>
        <alternativeName>
            <fullName evidence="1">D-beta-D-heptose 7-phosphotransferase</fullName>
        </alternativeName>
        <alternativeName>
            <fullName evidence="1">D-glycero-beta-D-manno-heptose-7-phosphate kinase</fullName>
        </alternativeName>
    </domain>
    <domain>
        <recommendedName>
            <fullName evidence="1">D-beta-D-heptose 1-phosphate adenylyltransferase</fullName>
            <ecNumber evidence="1">2.7.7.70</ecNumber>
        </recommendedName>
        <alternativeName>
            <fullName evidence="1">D-glycero-beta-D-manno-heptose 1-phosphate adenylyltransferase</fullName>
        </alternativeName>
    </domain>
</protein>